<accession>Q1KXU2</accession>
<proteinExistence type="inferred from homology"/>
<dbReference type="EMBL" id="DQ383815">
    <property type="protein sequence ID" value="ABD47163.1"/>
    <property type="molecule type" value="Genomic_DNA"/>
</dbReference>
<dbReference type="RefSeq" id="YP_588134.1">
    <property type="nucleotide sequence ID" value="NC_007977.1"/>
</dbReference>
<dbReference type="SMR" id="Q1KXU2"/>
<dbReference type="EnsemblPlants" id="mRNA:HanXRQr2_Chr02g0061601">
    <property type="protein sequence ID" value="CDS:HanXRQr2_Chr02g0061601.1"/>
    <property type="gene ID" value="HanXRQr2_Chr02g0061601"/>
</dbReference>
<dbReference type="EnsemblPlants" id="mRNA:HanXRQr2_Chr11g0496381">
    <property type="protein sequence ID" value="CDS:HanXRQr2_Chr11g0496381.1"/>
    <property type="gene ID" value="HanXRQr2_Chr11g0496381"/>
</dbReference>
<dbReference type="GeneID" id="4055671"/>
<dbReference type="Gramene" id="mRNA:HanXRQr2_Chr02g0061601">
    <property type="protein sequence ID" value="CDS:HanXRQr2_Chr02g0061601.1"/>
    <property type="gene ID" value="HanXRQr2_Chr02g0061601"/>
</dbReference>
<dbReference type="Gramene" id="mRNA:HanXRQr2_Chr11g0496381">
    <property type="protein sequence ID" value="CDS:HanXRQr2_Chr11g0496381.1"/>
    <property type="gene ID" value="HanXRQr2_Chr11g0496381"/>
</dbReference>
<dbReference type="KEGG" id="han:4055671"/>
<dbReference type="OrthoDB" id="1839964at2759"/>
<dbReference type="GO" id="GO:0009535">
    <property type="term" value="C:chloroplast thylakoid membrane"/>
    <property type="evidence" value="ECO:0007669"/>
    <property type="project" value="UniProtKB-SubCell"/>
</dbReference>
<dbReference type="GO" id="GO:0009539">
    <property type="term" value="C:photosystem II reaction center"/>
    <property type="evidence" value="ECO:0007669"/>
    <property type="project" value="InterPro"/>
</dbReference>
<dbReference type="GO" id="GO:0009055">
    <property type="term" value="F:electron transfer activity"/>
    <property type="evidence" value="ECO:0007669"/>
    <property type="project" value="UniProtKB-UniRule"/>
</dbReference>
<dbReference type="GO" id="GO:0020037">
    <property type="term" value="F:heme binding"/>
    <property type="evidence" value="ECO:0007669"/>
    <property type="project" value="InterPro"/>
</dbReference>
<dbReference type="GO" id="GO:0005506">
    <property type="term" value="F:iron ion binding"/>
    <property type="evidence" value="ECO:0007669"/>
    <property type="project" value="UniProtKB-UniRule"/>
</dbReference>
<dbReference type="GO" id="GO:0009767">
    <property type="term" value="P:photosynthetic electron transport chain"/>
    <property type="evidence" value="ECO:0007669"/>
    <property type="project" value="InterPro"/>
</dbReference>
<dbReference type="Gene3D" id="1.20.5.860">
    <property type="entry name" value="Photosystem II cytochrome b559, alpha subunit"/>
    <property type="match status" value="1"/>
</dbReference>
<dbReference type="HAMAP" id="MF_00642">
    <property type="entry name" value="PSII_PsbE"/>
    <property type="match status" value="1"/>
</dbReference>
<dbReference type="InterPro" id="IPR006217">
    <property type="entry name" value="PSII_cyt_b559_asu"/>
</dbReference>
<dbReference type="InterPro" id="IPR037025">
    <property type="entry name" value="PSII_cyt_b559_asu_sf"/>
</dbReference>
<dbReference type="InterPro" id="IPR006216">
    <property type="entry name" value="PSII_cyt_b559_CS"/>
</dbReference>
<dbReference type="InterPro" id="IPR013081">
    <property type="entry name" value="PSII_cyt_b559_N"/>
</dbReference>
<dbReference type="InterPro" id="IPR013082">
    <property type="entry name" value="PSII_cytb559_asu_lum"/>
</dbReference>
<dbReference type="NCBIfam" id="TIGR01332">
    <property type="entry name" value="cyt_b559_alpha"/>
    <property type="match status" value="1"/>
</dbReference>
<dbReference type="PANTHER" id="PTHR33391">
    <property type="entry name" value="CYTOCHROME B559 SUBUNIT BETA-RELATED"/>
    <property type="match status" value="1"/>
</dbReference>
<dbReference type="PANTHER" id="PTHR33391:SF9">
    <property type="entry name" value="CYTOCHROME B559 SUBUNIT BETA-RELATED"/>
    <property type="match status" value="1"/>
</dbReference>
<dbReference type="Pfam" id="PF00283">
    <property type="entry name" value="Cytochrom_B559"/>
    <property type="match status" value="1"/>
</dbReference>
<dbReference type="Pfam" id="PF00284">
    <property type="entry name" value="Cytochrom_B559a"/>
    <property type="match status" value="1"/>
</dbReference>
<dbReference type="PIRSF" id="PIRSF000036">
    <property type="entry name" value="PsbE"/>
    <property type="match status" value="1"/>
</dbReference>
<dbReference type="SUPFAM" id="SSF161045">
    <property type="entry name" value="Cytochrome b559 subunits"/>
    <property type="match status" value="1"/>
</dbReference>
<dbReference type="PROSITE" id="PS00537">
    <property type="entry name" value="CYTOCHROME_B559"/>
    <property type="match status" value="1"/>
</dbReference>
<comment type="function">
    <text evidence="1">This b-type cytochrome is tightly associated with the reaction center of photosystem II (PSII). PSII is a light-driven water:plastoquinone oxidoreductase that uses light energy to abstract electrons from H(2)O, generating O(2) and a proton gradient subsequently used for ATP formation. It consists of a core antenna complex that captures photons, and an electron transfer chain that converts photonic excitation into a charge separation.</text>
</comment>
<comment type="cofactor">
    <cofactor evidence="1">
        <name>heme b</name>
        <dbReference type="ChEBI" id="CHEBI:60344"/>
    </cofactor>
    <text evidence="1">With its partner (PsbF) binds heme. PSII binds additional chlorophylls, carotenoids and specific lipids.</text>
</comment>
<comment type="subunit">
    <text evidence="1">Heterodimer of an alpha subunit and a beta subunit. PSII is composed of 1 copy each of membrane proteins PsbA, PsbB, PsbC, PsbD, PsbE, PsbF, PsbH, PsbI, PsbJ, PsbK, PsbL, PsbM, PsbT, PsbX, PsbY, PsbZ, Psb30/Ycf12, at least 3 peripheral proteins of the oxygen-evolving complex and a large number of cofactors. It forms dimeric complexes.</text>
</comment>
<comment type="subcellular location">
    <subcellularLocation>
        <location evidence="1">Plastid</location>
        <location evidence="1">Chloroplast thylakoid membrane</location>
        <topology evidence="1">Single-pass membrane protein</topology>
    </subcellularLocation>
</comment>
<comment type="similarity">
    <text evidence="1">Belongs to the PsbE/PsbF family.</text>
</comment>
<keyword id="KW-0150">Chloroplast</keyword>
<keyword id="KW-0249">Electron transport</keyword>
<keyword id="KW-0349">Heme</keyword>
<keyword id="KW-0408">Iron</keyword>
<keyword id="KW-0472">Membrane</keyword>
<keyword id="KW-0479">Metal-binding</keyword>
<keyword id="KW-0602">Photosynthesis</keyword>
<keyword id="KW-0604">Photosystem II</keyword>
<keyword id="KW-0934">Plastid</keyword>
<keyword id="KW-0793">Thylakoid</keyword>
<keyword id="KW-0812">Transmembrane</keyword>
<keyword id="KW-1133">Transmembrane helix</keyword>
<keyword id="KW-0813">Transport</keyword>
<evidence type="ECO:0000255" key="1">
    <source>
        <dbReference type="HAMAP-Rule" id="MF_00642"/>
    </source>
</evidence>
<reference key="1">
    <citation type="submission" date="2006-01" db="EMBL/GenBank/DDBJ databases">
        <title>A comparison of the first two published chloroplast genomes in Asteraceae: Lactuca and Helianthus.</title>
        <authorList>
            <person name="Timme R.E."/>
            <person name="Kuehl J.V."/>
            <person name="Boore J.L."/>
            <person name="Jansen R.K."/>
        </authorList>
    </citation>
    <scope>NUCLEOTIDE SEQUENCE [LARGE SCALE GENOMIC DNA]</scope>
    <source>
        <strain>cv. HA383</strain>
    </source>
</reference>
<feature type="chain" id="PRO_0000275708" description="Cytochrome b559 subunit alpha">
    <location>
        <begin position="1"/>
        <end position="83"/>
    </location>
</feature>
<feature type="transmembrane region" description="Helical" evidence="1">
    <location>
        <begin position="21"/>
        <end position="35"/>
    </location>
</feature>
<feature type="binding site" description="axial binding residue" evidence="1">
    <location>
        <position position="23"/>
    </location>
    <ligand>
        <name>heme</name>
        <dbReference type="ChEBI" id="CHEBI:30413"/>
        <note>ligand shared with beta subunit</note>
    </ligand>
    <ligandPart>
        <name>Fe</name>
        <dbReference type="ChEBI" id="CHEBI:18248"/>
    </ligandPart>
</feature>
<sequence length="83" mass="9414">MSGSTGERSFADIITSIRYWVIHSITIPSLFIAGWLFVSTGLAYDVFGSPRPNEYFTENRQGIPLITGRFDSLEQLDEFSRSF</sequence>
<name>PSBE_HELAN</name>
<organism>
    <name type="scientific">Helianthus annuus</name>
    <name type="common">Common sunflower</name>
    <dbReference type="NCBI Taxonomy" id="4232"/>
    <lineage>
        <taxon>Eukaryota</taxon>
        <taxon>Viridiplantae</taxon>
        <taxon>Streptophyta</taxon>
        <taxon>Embryophyta</taxon>
        <taxon>Tracheophyta</taxon>
        <taxon>Spermatophyta</taxon>
        <taxon>Magnoliopsida</taxon>
        <taxon>eudicotyledons</taxon>
        <taxon>Gunneridae</taxon>
        <taxon>Pentapetalae</taxon>
        <taxon>asterids</taxon>
        <taxon>campanulids</taxon>
        <taxon>Asterales</taxon>
        <taxon>Asteraceae</taxon>
        <taxon>Asteroideae</taxon>
        <taxon>Heliantheae alliance</taxon>
        <taxon>Heliantheae</taxon>
        <taxon>Helianthus</taxon>
    </lineage>
</organism>
<geneLocation type="chloroplast"/>
<gene>
    <name evidence="1" type="primary">psbE</name>
</gene>
<protein>
    <recommendedName>
        <fullName evidence="1">Cytochrome b559 subunit alpha</fullName>
    </recommendedName>
    <alternativeName>
        <fullName evidence="1">PSII reaction center subunit V</fullName>
    </alternativeName>
</protein>